<protein>
    <recommendedName>
        <fullName>Uncharacterized oxidoreductase SPBC1348.09</fullName>
        <ecNumber>1.-.-.-</ecNumber>
    </recommendedName>
</protein>
<reference key="1">
    <citation type="journal article" date="2002" name="Nature">
        <title>The genome sequence of Schizosaccharomyces pombe.</title>
        <authorList>
            <person name="Wood V."/>
            <person name="Gwilliam R."/>
            <person name="Rajandream M.A."/>
            <person name="Lyne M.H."/>
            <person name="Lyne R."/>
            <person name="Stewart A."/>
            <person name="Sgouros J.G."/>
            <person name="Peat N."/>
            <person name="Hayles J."/>
            <person name="Baker S.G."/>
            <person name="Basham D."/>
            <person name="Bowman S."/>
            <person name="Brooks K."/>
            <person name="Brown D."/>
            <person name="Brown S."/>
            <person name="Chillingworth T."/>
            <person name="Churcher C.M."/>
            <person name="Collins M."/>
            <person name="Connor R."/>
            <person name="Cronin A."/>
            <person name="Davis P."/>
            <person name="Feltwell T."/>
            <person name="Fraser A."/>
            <person name="Gentles S."/>
            <person name="Goble A."/>
            <person name="Hamlin N."/>
            <person name="Harris D.E."/>
            <person name="Hidalgo J."/>
            <person name="Hodgson G."/>
            <person name="Holroyd S."/>
            <person name="Hornsby T."/>
            <person name="Howarth S."/>
            <person name="Huckle E.J."/>
            <person name="Hunt S."/>
            <person name="Jagels K."/>
            <person name="James K.D."/>
            <person name="Jones L."/>
            <person name="Jones M."/>
            <person name="Leather S."/>
            <person name="McDonald S."/>
            <person name="McLean J."/>
            <person name="Mooney P."/>
            <person name="Moule S."/>
            <person name="Mungall K.L."/>
            <person name="Murphy L.D."/>
            <person name="Niblett D."/>
            <person name="Odell C."/>
            <person name="Oliver K."/>
            <person name="O'Neil S."/>
            <person name="Pearson D."/>
            <person name="Quail M.A."/>
            <person name="Rabbinowitsch E."/>
            <person name="Rutherford K.M."/>
            <person name="Rutter S."/>
            <person name="Saunders D."/>
            <person name="Seeger K."/>
            <person name="Sharp S."/>
            <person name="Skelton J."/>
            <person name="Simmonds M.N."/>
            <person name="Squares R."/>
            <person name="Squares S."/>
            <person name="Stevens K."/>
            <person name="Taylor K."/>
            <person name="Taylor R.G."/>
            <person name="Tivey A."/>
            <person name="Walsh S.V."/>
            <person name="Warren T."/>
            <person name="Whitehead S."/>
            <person name="Woodward J.R."/>
            <person name="Volckaert G."/>
            <person name="Aert R."/>
            <person name="Robben J."/>
            <person name="Grymonprez B."/>
            <person name="Weltjens I."/>
            <person name="Vanstreels E."/>
            <person name="Rieger M."/>
            <person name="Schaefer M."/>
            <person name="Mueller-Auer S."/>
            <person name="Gabel C."/>
            <person name="Fuchs M."/>
            <person name="Duesterhoeft A."/>
            <person name="Fritzc C."/>
            <person name="Holzer E."/>
            <person name="Moestl D."/>
            <person name="Hilbert H."/>
            <person name="Borzym K."/>
            <person name="Langer I."/>
            <person name="Beck A."/>
            <person name="Lehrach H."/>
            <person name="Reinhardt R."/>
            <person name="Pohl T.M."/>
            <person name="Eger P."/>
            <person name="Zimmermann W."/>
            <person name="Wedler H."/>
            <person name="Wambutt R."/>
            <person name="Purnelle B."/>
            <person name="Goffeau A."/>
            <person name="Cadieu E."/>
            <person name="Dreano S."/>
            <person name="Gloux S."/>
            <person name="Lelaure V."/>
            <person name="Mottier S."/>
            <person name="Galibert F."/>
            <person name="Aves S.J."/>
            <person name="Xiang Z."/>
            <person name="Hunt C."/>
            <person name="Moore K."/>
            <person name="Hurst S.M."/>
            <person name="Lucas M."/>
            <person name="Rochet M."/>
            <person name="Gaillardin C."/>
            <person name="Tallada V.A."/>
            <person name="Garzon A."/>
            <person name="Thode G."/>
            <person name="Daga R.R."/>
            <person name="Cruzado L."/>
            <person name="Jimenez J."/>
            <person name="Sanchez M."/>
            <person name="del Rey F."/>
            <person name="Benito J."/>
            <person name="Dominguez A."/>
            <person name="Revuelta J.L."/>
            <person name="Moreno S."/>
            <person name="Armstrong J."/>
            <person name="Forsburg S.L."/>
            <person name="Cerutti L."/>
            <person name="Lowe T."/>
            <person name="McCombie W.R."/>
            <person name="Paulsen I."/>
            <person name="Potashkin J."/>
            <person name="Shpakovski G.V."/>
            <person name="Ussery D."/>
            <person name="Barrell B.G."/>
            <person name="Nurse P."/>
        </authorList>
    </citation>
    <scope>NUCLEOTIDE SEQUENCE [LARGE SCALE GENOMIC DNA]</scope>
    <source>
        <strain>972 / ATCC 24843</strain>
    </source>
</reference>
<organism>
    <name type="scientific">Schizosaccharomyces pombe (strain 972 / ATCC 24843)</name>
    <name type="common">Fission yeast</name>
    <dbReference type="NCBI Taxonomy" id="284812"/>
    <lineage>
        <taxon>Eukaryota</taxon>
        <taxon>Fungi</taxon>
        <taxon>Dikarya</taxon>
        <taxon>Ascomycota</taxon>
        <taxon>Taphrinomycotina</taxon>
        <taxon>Schizosaccharomycetes</taxon>
        <taxon>Schizosaccharomycetales</taxon>
        <taxon>Schizosaccharomycetaceae</taxon>
        <taxon>Schizosaccharomyces</taxon>
    </lineage>
</organism>
<sequence length="236" mass="26452">MREPKNAKVLSRLENVLVTQLDVNNFSSIKKSVEKAISHFGRIDVLLNNAGYSVYSPLESTTEEQIHNIFNTNVFGALEVIKAITPIFRSQHNGMIINVSSIGGKMTFPLGCLYYGTKYAIEGISEALTWEMQSIGVKVKIIEPGFTATEFRVEEGAGKHYAEYDNLKQKLYEDLLPKLKTATPPQKIAEVILQAATDESDELRYPTGDYVVEWMALRSKVDDATFLATHRKQMGL</sequence>
<evidence type="ECO:0000250" key="1">
    <source>
        <dbReference type="UniProtKB" id="L0E2Z4"/>
    </source>
</evidence>
<evidence type="ECO:0000250" key="2">
    <source>
        <dbReference type="UniProtKB" id="O93868"/>
    </source>
</evidence>
<evidence type="ECO:0000250" key="3">
    <source>
        <dbReference type="UniProtKB" id="P0CU00"/>
    </source>
</evidence>
<evidence type="ECO:0000305" key="4"/>
<feature type="chain" id="PRO_0000374030" description="Uncharacterized oxidoreductase SPBC1348.09">
    <location>
        <begin position="1"/>
        <end position="236"/>
    </location>
</feature>
<feature type="active site" description="Proton donor" evidence="2">
    <location>
        <position position="100"/>
    </location>
</feature>
<feature type="active site" description="Proton donor" evidence="2">
    <location>
        <position position="114"/>
    </location>
</feature>
<feature type="active site" description="Lowers pKa of active site Tyr" evidence="2">
    <location>
        <position position="118"/>
    </location>
</feature>
<feature type="binding site" evidence="1">
    <location>
        <position position="22"/>
    </location>
    <ligand>
        <name>NADP(+)</name>
        <dbReference type="ChEBI" id="CHEBI:58349"/>
    </ligand>
</feature>
<feature type="binding site" evidence="2">
    <location>
        <position position="49"/>
    </location>
    <ligand>
        <name>NADP(+)</name>
        <dbReference type="ChEBI" id="CHEBI:58349"/>
    </ligand>
</feature>
<feature type="binding site" evidence="1">
    <location>
        <position position="82"/>
    </location>
    <ligand>
        <name>NADP(+)</name>
        <dbReference type="ChEBI" id="CHEBI:58349"/>
    </ligand>
</feature>
<feature type="binding site" evidence="2">
    <location>
        <position position="114"/>
    </location>
    <ligand>
        <name>NADP(+)</name>
        <dbReference type="ChEBI" id="CHEBI:58349"/>
    </ligand>
</feature>
<feature type="binding site" evidence="2">
    <location>
        <position position="118"/>
    </location>
    <ligand>
        <name>NADP(+)</name>
        <dbReference type="ChEBI" id="CHEBI:58349"/>
    </ligand>
</feature>
<proteinExistence type="inferred from homology"/>
<keyword id="KW-0963">Cytoplasm</keyword>
<keyword id="KW-0521">NADP</keyword>
<keyword id="KW-0539">Nucleus</keyword>
<keyword id="KW-0560">Oxidoreductase</keyword>
<keyword id="KW-1185">Reference proteome</keyword>
<name>YI49_SCHPO</name>
<accession>P0CU01</accession>
<accession>Q9P324</accession>
<gene>
    <name type="ORF">SPAC1348.09</name>
    <name type="ORF">SPBC1348.09</name>
</gene>
<dbReference type="EC" id="1.-.-.-"/>
<dbReference type="EMBL" id="CU329671">
    <property type="protein sequence ID" value="CAB94276.1"/>
    <property type="molecule type" value="Genomic_DNA"/>
</dbReference>
<dbReference type="PIR" id="T50280">
    <property type="entry name" value="T50280"/>
</dbReference>
<dbReference type="RefSeq" id="NP_592771.1">
    <property type="nucleotide sequence ID" value="NM_001020934.1"/>
</dbReference>
<dbReference type="SMR" id="P0CU01"/>
<dbReference type="FunCoup" id="P0CU01">
    <property type="interactions" value="1"/>
</dbReference>
<dbReference type="STRING" id="284812.P0CU01"/>
<dbReference type="PaxDb" id="4896-SPAC977.08.1"/>
<dbReference type="EnsemblFungi" id="SPAC977.08.1">
    <property type="protein sequence ID" value="SPAC977.08.1:pep"/>
    <property type="gene ID" value="SPAC977.08"/>
</dbReference>
<dbReference type="EnsemblFungi" id="SPBC1348.09.1">
    <property type="protein sequence ID" value="SPBC1348.09.1:pep"/>
    <property type="gene ID" value="SPBC1348.09"/>
</dbReference>
<dbReference type="KEGG" id="spo:2541718"/>
<dbReference type="KEGG" id="spo:2543330"/>
<dbReference type="PomBase" id="SPBC1348.09"/>
<dbReference type="VEuPathDB" id="FungiDB:SPAC977.08"/>
<dbReference type="VEuPathDB" id="FungiDB:SPBC1348.09"/>
<dbReference type="eggNOG" id="KOG1205">
    <property type="taxonomic scope" value="Eukaryota"/>
</dbReference>
<dbReference type="InParanoid" id="P0CU01"/>
<dbReference type="OMA" id="MKDLMHS"/>
<dbReference type="PhylomeDB" id="P0CU01"/>
<dbReference type="PRO" id="PR:P0CU01"/>
<dbReference type="Proteomes" id="UP000002485">
    <property type="component" value="Chromosome II"/>
</dbReference>
<dbReference type="GO" id="GO:0005737">
    <property type="term" value="C:cytoplasm"/>
    <property type="evidence" value="ECO:0007669"/>
    <property type="project" value="UniProtKB-SubCell"/>
</dbReference>
<dbReference type="GO" id="GO:0005634">
    <property type="term" value="C:nucleus"/>
    <property type="evidence" value="ECO:0007669"/>
    <property type="project" value="UniProtKB-SubCell"/>
</dbReference>
<dbReference type="GO" id="GO:0016491">
    <property type="term" value="F:oxidoreductase activity"/>
    <property type="evidence" value="ECO:0000255"/>
    <property type="project" value="PomBase"/>
</dbReference>
<dbReference type="Gene3D" id="3.40.50.720">
    <property type="entry name" value="NAD(P)-binding Rossmann-like Domain"/>
    <property type="match status" value="1"/>
</dbReference>
<dbReference type="InterPro" id="IPR036291">
    <property type="entry name" value="NAD(P)-bd_dom_sf"/>
</dbReference>
<dbReference type="InterPro" id="IPR002347">
    <property type="entry name" value="SDR_fam"/>
</dbReference>
<dbReference type="InterPro" id="IPR051911">
    <property type="entry name" value="SDR_oxidoreductase"/>
</dbReference>
<dbReference type="PANTHER" id="PTHR43976">
    <property type="entry name" value="SHORT CHAIN DEHYDROGENASE"/>
    <property type="match status" value="1"/>
</dbReference>
<dbReference type="PANTHER" id="PTHR43976:SF16">
    <property type="entry name" value="SHORT-CHAIN DEHYDROGENASE_REDUCTASE FAMILY PROTEIN"/>
    <property type="match status" value="1"/>
</dbReference>
<dbReference type="Pfam" id="PF00106">
    <property type="entry name" value="adh_short"/>
    <property type="match status" value="1"/>
</dbReference>
<dbReference type="PRINTS" id="PR00081">
    <property type="entry name" value="GDHRDH"/>
</dbReference>
<dbReference type="PRINTS" id="PR00080">
    <property type="entry name" value="SDRFAMILY"/>
</dbReference>
<dbReference type="SUPFAM" id="SSF51735">
    <property type="entry name" value="NAD(P)-binding Rossmann-fold domains"/>
    <property type="match status" value="1"/>
</dbReference>
<comment type="subcellular location">
    <subcellularLocation>
        <location evidence="3">Cytoplasm</location>
    </subcellularLocation>
    <subcellularLocation>
        <location evidence="3">Nucleus</location>
    </subcellularLocation>
</comment>
<comment type="similarity">
    <text evidence="4">Belongs to the short-chain dehydrogenases/reductases (SDR) family.</text>
</comment>